<name>TCP16_ARATH</name>
<gene>
    <name type="primary">TCP16</name>
    <name type="ordered locus">At3g45150</name>
    <name type="ORF">T14D3.90</name>
</gene>
<protein>
    <recommendedName>
        <fullName>Transcription factor TCP16</fullName>
    </recommendedName>
</protein>
<reference key="1">
    <citation type="journal article" date="2000" name="Nature">
        <title>Sequence and analysis of chromosome 3 of the plant Arabidopsis thaliana.</title>
        <authorList>
            <person name="Salanoubat M."/>
            <person name="Lemcke K."/>
            <person name="Rieger M."/>
            <person name="Ansorge W."/>
            <person name="Unseld M."/>
            <person name="Fartmann B."/>
            <person name="Valle G."/>
            <person name="Bloecker H."/>
            <person name="Perez-Alonso M."/>
            <person name="Obermaier B."/>
            <person name="Delseny M."/>
            <person name="Boutry M."/>
            <person name="Grivell L.A."/>
            <person name="Mache R."/>
            <person name="Puigdomenech P."/>
            <person name="De Simone V."/>
            <person name="Choisne N."/>
            <person name="Artiguenave F."/>
            <person name="Robert C."/>
            <person name="Brottier P."/>
            <person name="Wincker P."/>
            <person name="Cattolico L."/>
            <person name="Weissenbach J."/>
            <person name="Saurin W."/>
            <person name="Quetier F."/>
            <person name="Schaefer M."/>
            <person name="Mueller-Auer S."/>
            <person name="Gabel C."/>
            <person name="Fuchs M."/>
            <person name="Benes V."/>
            <person name="Wurmbach E."/>
            <person name="Drzonek H."/>
            <person name="Erfle H."/>
            <person name="Jordan N."/>
            <person name="Bangert S."/>
            <person name="Wiedelmann R."/>
            <person name="Kranz H."/>
            <person name="Voss H."/>
            <person name="Holland R."/>
            <person name="Brandt P."/>
            <person name="Nyakatura G."/>
            <person name="Vezzi A."/>
            <person name="D'Angelo M."/>
            <person name="Pallavicini A."/>
            <person name="Toppo S."/>
            <person name="Simionati B."/>
            <person name="Conrad A."/>
            <person name="Hornischer K."/>
            <person name="Kauer G."/>
            <person name="Loehnert T.-H."/>
            <person name="Nordsiek G."/>
            <person name="Reichelt J."/>
            <person name="Scharfe M."/>
            <person name="Schoen O."/>
            <person name="Bargues M."/>
            <person name="Terol J."/>
            <person name="Climent J."/>
            <person name="Navarro P."/>
            <person name="Collado C."/>
            <person name="Perez-Perez A."/>
            <person name="Ottenwaelder B."/>
            <person name="Duchemin D."/>
            <person name="Cooke R."/>
            <person name="Laudie M."/>
            <person name="Berger-Llauro C."/>
            <person name="Purnelle B."/>
            <person name="Masuy D."/>
            <person name="de Haan M."/>
            <person name="Maarse A.C."/>
            <person name="Alcaraz J.-P."/>
            <person name="Cottet A."/>
            <person name="Casacuberta E."/>
            <person name="Monfort A."/>
            <person name="Argiriou A."/>
            <person name="Flores M."/>
            <person name="Liguori R."/>
            <person name="Vitale D."/>
            <person name="Mannhaupt G."/>
            <person name="Haase D."/>
            <person name="Schoof H."/>
            <person name="Rudd S."/>
            <person name="Zaccaria P."/>
            <person name="Mewes H.-W."/>
            <person name="Mayer K.F.X."/>
            <person name="Kaul S."/>
            <person name="Town C.D."/>
            <person name="Koo H.L."/>
            <person name="Tallon L.J."/>
            <person name="Jenkins J."/>
            <person name="Rooney T."/>
            <person name="Rizzo M."/>
            <person name="Walts A."/>
            <person name="Utterback T."/>
            <person name="Fujii C.Y."/>
            <person name="Shea T.P."/>
            <person name="Creasy T.H."/>
            <person name="Haas B."/>
            <person name="Maiti R."/>
            <person name="Wu D."/>
            <person name="Peterson J."/>
            <person name="Van Aken S."/>
            <person name="Pai G."/>
            <person name="Militscher J."/>
            <person name="Sellers P."/>
            <person name="Gill J.E."/>
            <person name="Feldblyum T.V."/>
            <person name="Preuss D."/>
            <person name="Lin X."/>
            <person name="Nierman W.C."/>
            <person name="Salzberg S.L."/>
            <person name="White O."/>
            <person name="Venter J.C."/>
            <person name="Fraser C.M."/>
            <person name="Kaneko T."/>
            <person name="Nakamura Y."/>
            <person name="Sato S."/>
            <person name="Kato T."/>
            <person name="Asamizu E."/>
            <person name="Sasamoto S."/>
            <person name="Kimura T."/>
            <person name="Idesawa K."/>
            <person name="Kawashima K."/>
            <person name="Kishida Y."/>
            <person name="Kiyokawa C."/>
            <person name="Kohara M."/>
            <person name="Matsumoto M."/>
            <person name="Matsuno A."/>
            <person name="Muraki A."/>
            <person name="Nakayama S."/>
            <person name="Nakazaki N."/>
            <person name="Shinpo S."/>
            <person name="Takeuchi C."/>
            <person name="Wada T."/>
            <person name="Watanabe A."/>
            <person name="Yamada M."/>
            <person name="Yasuda M."/>
            <person name="Tabata S."/>
        </authorList>
    </citation>
    <scope>NUCLEOTIDE SEQUENCE [LARGE SCALE GENOMIC DNA]</scope>
    <source>
        <strain>cv. Columbia</strain>
    </source>
</reference>
<reference key="2">
    <citation type="journal article" date="2017" name="Plant J.">
        <title>Araport11: a complete reannotation of the Arabidopsis thaliana reference genome.</title>
        <authorList>
            <person name="Cheng C.Y."/>
            <person name="Krishnakumar V."/>
            <person name="Chan A.P."/>
            <person name="Thibaud-Nissen F."/>
            <person name="Schobel S."/>
            <person name="Town C.D."/>
        </authorList>
    </citation>
    <scope>GENOME REANNOTATION</scope>
    <source>
        <strain>cv. Columbia</strain>
    </source>
</reference>
<reference key="3">
    <citation type="journal article" date="2002" name="Comp. Funct. Genomics">
        <title>REGIA, an EU project on functional genomics of transcription factors from Arabidopsis thaliana.</title>
        <authorList>
            <person name="Paz-Ares J."/>
            <person name="Valencia A."/>
            <person name="Costantino P."/>
            <person name="Vittorioso P."/>
            <person name="Davies B."/>
            <person name="Gilmartin P."/>
            <person name="Giraudat J."/>
            <person name="Parcy F."/>
            <person name="Reindl A."/>
            <person name="Sablowski R."/>
            <person name="Coupland G."/>
            <person name="Martin C."/>
            <person name="Angenent G.C."/>
            <person name="Baeumlein H."/>
            <person name="Mock H.-P."/>
            <person name="Carbonero P."/>
            <person name="Colombo L."/>
            <person name="Tonelli C."/>
            <person name="Engstroem P."/>
            <person name="Droege-Laser W."/>
            <person name="Gatz C."/>
            <person name="Kavanagh T."/>
            <person name="Kushnir S."/>
            <person name="Zabeau M."/>
            <person name="Laux T."/>
            <person name="Hordsworth M."/>
            <person name="Ruberti I."/>
            <person name="Ratcliff F."/>
            <person name="Smeekens S."/>
            <person name="Somssich I."/>
            <person name="Weisshaar B."/>
            <person name="Traas J."/>
        </authorList>
    </citation>
    <scope>NUCLEOTIDE SEQUENCE [LARGE SCALE MRNA]</scope>
    <source>
        <strain>cv. Columbia</strain>
    </source>
</reference>
<reference key="4">
    <citation type="journal article" date="2006" name="Plant Mol. Biol.">
        <title>RNA interference of the Arabidopsis putative transcription factor TCP16 gene results in abortion of early pollen development.</title>
        <authorList>
            <person name="Takeda T."/>
            <person name="Amano K."/>
            <person name="Ohto M.-A."/>
            <person name="Nakamura K."/>
            <person name="Sato S."/>
            <person name="Kato T."/>
            <person name="Tabata S."/>
            <person name="Ueguchi C."/>
        </authorList>
    </citation>
    <scope>FUNCTION</scope>
    <scope>TISSUE SPECIFICITY</scope>
    <scope>DEVELOPMENTAL STAGE</scope>
</reference>
<reference key="5">
    <citation type="journal article" date="2007" name="Plant Cell">
        <title>Arabidopsis BRANCHED1 acts as an integrator of branching signals within axillary buds.</title>
        <authorList>
            <person name="Aguilar-Martinez J.A."/>
            <person name="Poza-Carrion C."/>
            <person name="Cubas P."/>
        </authorList>
    </citation>
    <scope>GENE FAMILY</scope>
    <scope>NOMENCLATURE</scope>
</reference>
<organism>
    <name type="scientific">Arabidopsis thaliana</name>
    <name type="common">Mouse-ear cress</name>
    <dbReference type="NCBI Taxonomy" id="3702"/>
    <lineage>
        <taxon>Eukaryota</taxon>
        <taxon>Viridiplantae</taxon>
        <taxon>Streptophyta</taxon>
        <taxon>Embryophyta</taxon>
        <taxon>Tracheophyta</taxon>
        <taxon>Spermatophyta</taxon>
        <taxon>Magnoliopsida</taxon>
        <taxon>eudicotyledons</taxon>
        <taxon>Gunneridae</taxon>
        <taxon>Pentapetalae</taxon>
        <taxon>rosids</taxon>
        <taxon>malvids</taxon>
        <taxon>Brassicales</taxon>
        <taxon>Brassicaceae</taxon>
        <taxon>Camelineae</taxon>
        <taxon>Arabidopsis</taxon>
    </lineage>
</organism>
<evidence type="ECO:0000255" key="1">
    <source>
        <dbReference type="PROSITE-ProRule" id="PRU00701"/>
    </source>
</evidence>
<evidence type="ECO:0000256" key="2">
    <source>
        <dbReference type="SAM" id="MobiDB-lite"/>
    </source>
</evidence>
<evidence type="ECO:0000269" key="3">
    <source>
    </source>
</evidence>
<evidence type="ECO:0000305" key="4"/>
<comment type="function">
    <text evidence="3">Required during early processes in pollen development.</text>
</comment>
<comment type="interaction">
    <interactant intactId="EBI-15198627">
        <id>Q9M1U4</id>
    </interactant>
    <interactant intactId="EBI-15196671">
        <id>Q7X887</id>
        <label>At2g02060</label>
    </interactant>
    <organismsDiffer>false</organismsDiffer>
    <experiments>3</experiments>
</comment>
<comment type="interaction">
    <interactant intactId="EBI-15198627">
        <id>Q9M1U4</id>
    </interactant>
    <interactant intactId="EBI-15191793">
        <id>O82617</id>
        <label>BBX23</label>
    </interactant>
    <organismsDiffer>false</organismsDiffer>
    <experiments>3</experiments>
</comment>
<comment type="interaction">
    <interactant intactId="EBI-15198627">
        <id>Q9M1U4</id>
    </interactant>
    <interactant intactId="EBI-1803261">
        <id>Q8S307</id>
        <label>BZR1</label>
    </interactant>
    <organismsDiffer>false</organismsDiffer>
    <experiments>3</experiments>
</comment>
<comment type="interaction">
    <interactant intactId="EBI-15198627">
        <id>Q9M1U4</id>
    </interactant>
    <interactant intactId="EBI-966009">
        <id>O80340</id>
        <label>ERF4</label>
    </interactant>
    <organismsDiffer>false</organismsDiffer>
    <experiments>5</experiments>
</comment>
<comment type="interaction">
    <interactant intactId="EBI-15198627">
        <id>Q9M1U4</id>
    </interactant>
    <interactant intactId="EBI-2000137">
        <id>Q9MAI5</id>
        <label>ERF8</label>
    </interactant>
    <organismsDiffer>false</organismsDiffer>
    <experiments>3</experiments>
</comment>
<comment type="interaction">
    <interactant intactId="EBI-15198627">
        <id>Q9M1U4</id>
    </interactant>
    <interactant intactId="EBI-4431933">
        <id>Q9FE67</id>
        <label>ERF9</label>
    </interactant>
    <organismsDiffer>false</organismsDiffer>
    <experiments>3</experiments>
</comment>
<comment type="interaction">
    <interactant intactId="EBI-15198627">
        <id>Q9M1U4</id>
    </interactant>
    <interactant intactId="EBI-25524519">
        <id>A0A2H1ZEF6</id>
        <label>IAA15</label>
    </interactant>
    <organismsDiffer>false</organismsDiffer>
    <experiments>3</experiments>
</comment>
<comment type="interaction">
    <interactant intactId="EBI-15198627">
        <id>Q9M1U4</id>
    </interactant>
    <interactant intactId="EBI-632243">
        <id>P93830</id>
        <label>IAA17</label>
    </interactant>
    <organismsDiffer>false</organismsDiffer>
    <experiments>6</experiments>
</comment>
<comment type="interaction">
    <interactant intactId="EBI-15198627">
        <id>Q9M1U4</id>
    </interactant>
    <interactant intactId="EBI-632272">
        <id>O24410</id>
        <label>IAA20</label>
    </interactant>
    <organismsDiffer>false</organismsDiffer>
    <experiments>3</experiments>
</comment>
<comment type="interaction">
    <interactant intactId="EBI-15198627">
        <id>Q9M1U4</id>
    </interactant>
    <interactant intactId="EBI-632216">
        <id>Q38827</id>
        <label>IAA9</label>
    </interactant>
    <organismsDiffer>false</organismsDiffer>
    <experiments>3</experiments>
</comment>
<comment type="interaction">
    <interactant intactId="EBI-15198627">
        <id>Q9M1U4</id>
    </interactant>
    <interactant intactId="EBI-541107">
        <id>Q9LUA3</id>
        <label>NIMIN-2</label>
    </interactant>
    <organismsDiffer>false</organismsDiffer>
    <experiments>3</experiments>
</comment>
<comment type="interaction">
    <interactant intactId="EBI-15198627">
        <id>Q9M1U4</id>
    </interactant>
    <interactant intactId="EBI-541115">
        <id>Q9FNZ4</id>
        <label>NIMIN-3</label>
    </interactant>
    <organismsDiffer>false</organismsDiffer>
    <experiments>3</experiments>
</comment>
<comment type="interaction">
    <interactant intactId="EBI-15198627">
        <id>Q9M1U4</id>
    </interactant>
    <interactant intactId="EBI-4459694">
        <id>Q6X7J9</id>
        <label>WOX4</label>
    </interactant>
    <organismsDiffer>false</organismsDiffer>
    <experiments>3</experiments>
</comment>
<comment type="subcellular location">
    <subcellularLocation>
        <location evidence="4">Nucleus</location>
    </subcellularLocation>
</comment>
<comment type="tissue specificity">
    <text evidence="3">Mostly in anther in young buds.</text>
</comment>
<comment type="developmental stage">
    <text evidence="3">Expressed in developing microspores during pollen development. First observed at the tetrad stage, and later accumulates in an early unicellular stage. Levels decrease as the pollen grain matures.</text>
</comment>
<keyword id="KW-0217">Developmental protein</keyword>
<keyword id="KW-0238">DNA-binding</keyword>
<keyword id="KW-0539">Nucleus</keyword>
<keyword id="KW-1185">Reference proteome</keyword>
<keyword id="KW-0804">Transcription</keyword>
<keyword id="KW-0805">Transcription regulation</keyword>
<proteinExistence type="evidence at protein level"/>
<feature type="chain" id="PRO_0000330790" description="Transcription factor TCP16">
    <location>
        <begin position="1"/>
        <end position="165"/>
    </location>
</feature>
<feature type="domain" description="TCP" evidence="1">
    <location>
        <begin position="17"/>
        <end position="71"/>
    </location>
</feature>
<feature type="region of interest" description="Disordered" evidence="2">
    <location>
        <begin position="1"/>
        <end position="21"/>
    </location>
</feature>
<feature type="region of interest" description="Disordered" evidence="2">
    <location>
        <begin position="146"/>
        <end position="165"/>
    </location>
</feature>
<feature type="compositionally biased region" description="Polar residues" evidence="2">
    <location>
        <begin position="1"/>
        <end position="11"/>
    </location>
</feature>
<feature type="compositionally biased region" description="Basic residues" evidence="2">
    <location>
        <begin position="12"/>
        <end position="21"/>
    </location>
</feature>
<feature type="compositionally biased region" description="Low complexity" evidence="2">
    <location>
        <begin position="148"/>
        <end position="165"/>
    </location>
</feature>
<accession>Q9M1U4</accession>
<sequence>MDSKNGINNSQKARRTPKDRHLKIGGRDRRIRIPPSVAPQLFRLTKELGFKTDGETVSWLLQNAEPAIFAATGHGVTTTSNEDIQPNRNFPSYTFNGDNISNNVFPCTVVNTGHRQMVFPVSTMTDHAPSTNYSTISDNYNSTFNGNATASDTTSAATTTATTTV</sequence>
<dbReference type="EMBL" id="AL138649">
    <property type="protein sequence ID" value="CAB72153.1"/>
    <property type="molecule type" value="Genomic_DNA"/>
</dbReference>
<dbReference type="EMBL" id="CP002686">
    <property type="protein sequence ID" value="AEE77998.1"/>
    <property type="molecule type" value="Genomic_DNA"/>
</dbReference>
<dbReference type="EMBL" id="DR751441">
    <property type="status" value="NOT_ANNOTATED_CDS"/>
    <property type="molecule type" value="mRNA"/>
</dbReference>
<dbReference type="EMBL" id="DR751442">
    <property type="status" value="NOT_ANNOTATED_CDS"/>
    <property type="molecule type" value="mRNA"/>
</dbReference>
<dbReference type="PIR" id="T47455">
    <property type="entry name" value="T47455"/>
</dbReference>
<dbReference type="RefSeq" id="NP_190101.1">
    <property type="nucleotide sequence ID" value="NM_114384.1"/>
</dbReference>
<dbReference type="SMR" id="Q9M1U4"/>
<dbReference type="BioGRID" id="8971">
    <property type="interactions" value="73"/>
</dbReference>
<dbReference type="IntAct" id="Q9M1U4">
    <property type="interactions" value="75"/>
</dbReference>
<dbReference type="STRING" id="3702.Q9M1U4"/>
<dbReference type="PaxDb" id="3702-AT3G45150.1"/>
<dbReference type="EnsemblPlants" id="AT3G45150.1">
    <property type="protein sequence ID" value="AT3G45150.1"/>
    <property type="gene ID" value="AT3G45150"/>
</dbReference>
<dbReference type="GeneID" id="823651"/>
<dbReference type="Gramene" id="AT3G45150.1">
    <property type="protein sequence ID" value="AT3G45150.1"/>
    <property type="gene ID" value="AT3G45150"/>
</dbReference>
<dbReference type="KEGG" id="ath:AT3G45150"/>
<dbReference type="Araport" id="AT3G45150"/>
<dbReference type="TAIR" id="AT3G45150">
    <property type="gene designation" value="TCP16"/>
</dbReference>
<dbReference type="eggNOG" id="ENOG502R1MR">
    <property type="taxonomic scope" value="Eukaryota"/>
</dbReference>
<dbReference type="HOGENOM" id="CLU_1613083_0_0_1"/>
<dbReference type="InParanoid" id="Q9M1U4"/>
<dbReference type="OMA" id="NIGHHEM"/>
<dbReference type="PhylomeDB" id="Q9M1U4"/>
<dbReference type="PRO" id="PR:Q9M1U4"/>
<dbReference type="Proteomes" id="UP000006548">
    <property type="component" value="Chromosome 3"/>
</dbReference>
<dbReference type="ExpressionAtlas" id="Q9M1U4">
    <property type="expression patterns" value="baseline"/>
</dbReference>
<dbReference type="GO" id="GO:0005634">
    <property type="term" value="C:nucleus"/>
    <property type="evidence" value="ECO:0007669"/>
    <property type="project" value="UniProtKB-SubCell"/>
</dbReference>
<dbReference type="GO" id="GO:0003700">
    <property type="term" value="F:DNA-binding transcription factor activity"/>
    <property type="evidence" value="ECO:0000250"/>
    <property type="project" value="TAIR"/>
</dbReference>
<dbReference type="GO" id="GO:0000976">
    <property type="term" value="F:transcription cis-regulatory region binding"/>
    <property type="evidence" value="ECO:0000353"/>
    <property type="project" value="TAIR"/>
</dbReference>
<dbReference type="InterPro" id="IPR017887">
    <property type="entry name" value="TF_TCP_subgr"/>
</dbReference>
<dbReference type="InterPro" id="IPR005333">
    <property type="entry name" value="Transcription_factor_TCP"/>
</dbReference>
<dbReference type="PANTHER" id="PTHR31072:SF170">
    <property type="entry name" value="TRANSCRIPTION FACTOR TCP15-RELATED"/>
    <property type="match status" value="1"/>
</dbReference>
<dbReference type="PANTHER" id="PTHR31072">
    <property type="entry name" value="TRANSCRIPTION FACTOR TCP4-RELATED"/>
    <property type="match status" value="1"/>
</dbReference>
<dbReference type="Pfam" id="PF03634">
    <property type="entry name" value="TCP"/>
    <property type="match status" value="1"/>
</dbReference>
<dbReference type="PROSITE" id="PS51369">
    <property type="entry name" value="TCP"/>
    <property type="match status" value="1"/>
</dbReference>